<evidence type="ECO:0000269" key="1">
    <source ref="1"/>
</evidence>
<evidence type="ECO:0000303" key="2">
    <source ref="1"/>
</evidence>
<evidence type="ECO:0000305" key="3"/>
<proteinExistence type="evidence at protein level"/>
<name>PL1_LUPLU</name>
<sequence length="20" mass="2204">GIFTFEDESTSTVAPAKLYK</sequence>
<protein>
    <recommendedName>
        <fullName>Protein PR-L1</fullName>
    </recommendedName>
</protein>
<dbReference type="GO" id="GO:0006952">
    <property type="term" value="P:defense response"/>
    <property type="evidence" value="ECO:0007669"/>
    <property type="project" value="UniProtKB-KW"/>
</dbReference>
<feature type="chain" id="PRO_0000154194" description="Protein PR-L1">
    <location>
        <begin position="1"/>
        <end position="20" status="greater than"/>
    </location>
</feature>
<feature type="non-terminal residue" evidence="2">
    <location>
        <position position="20"/>
    </location>
</feature>
<reference evidence="3" key="1">
    <citation type="journal article" date="1999" name="J. Plant Physiol.">
        <title>Heavy metal-induced polypeptides in lupin roots are similar to pathogenesis-related proteins.</title>
        <authorList>
            <person name="Przymusinski R."/>
            <person name="Gwozdz E.A."/>
        </authorList>
    </citation>
    <scope>PROTEIN SEQUENCE</scope>
    <scope>INDUCTION</scope>
    <source>
        <strain>cv. Ventus</strain>
        <tissue>Root tip</tissue>
    </source>
</reference>
<accession>P83363</accession>
<organism evidence="3">
    <name type="scientific">Lupinus luteus</name>
    <name type="common">European yellow lupine</name>
    <dbReference type="NCBI Taxonomy" id="3873"/>
    <lineage>
        <taxon>Eukaryota</taxon>
        <taxon>Viridiplantae</taxon>
        <taxon>Streptophyta</taxon>
        <taxon>Embryophyta</taxon>
        <taxon>Tracheophyta</taxon>
        <taxon>Spermatophyta</taxon>
        <taxon>Magnoliopsida</taxon>
        <taxon>eudicotyledons</taxon>
        <taxon>Gunneridae</taxon>
        <taxon>Pentapetalae</taxon>
        <taxon>rosids</taxon>
        <taxon>fabids</taxon>
        <taxon>Fabales</taxon>
        <taxon>Fabaceae</taxon>
        <taxon>Papilionoideae</taxon>
        <taxon>50 kb inversion clade</taxon>
        <taxon>genistoids sensu lato</taxon>
        <taxon>core genistoids</taxon>
        <taxon>Genisteae</taxon>
        <taxon>Lupinus</taxon>
    </lineage>
</organism>
<keyword id="KW-0903">Direct protein sequencing</keyword>
<keyword id="KW-0568">Pathogenesis-related protein</keyword>
<keyword id="KW-0611">Plant defense</keyword>
<comment type="induction">
    <text evidence="1">By heavy metal ions.</text>
</comment>
<comment type="similarity">
    <text evidence="3">Belongs to the BetVI family.</text>
</comment>